<protein>
    <recommendedName>
        <fullName evidence="1">UPF0323 lipoprotein Cj0371</fullName>
    </recommendedName>
</protein>
<name>Y371_CAMJE</name>
<reference key="1">
    <citation type="journal article" date="2000" name="Nature">
        <title>The genome sequence of the food-borne pathogen Campylobacter jejuni reveals hypervariable sequences.</title>
        <authorList>
            <person name="Parkhill J."/>
            <person name="Wren B.W."/>
            <person name="Mungall K.L."/>
            <person name="Ketley J.M."/>
            <person name="Churcher C.M."/>
            <person name="Basham D."/>
            <person name="Chillingworth T."/>
            <person name="Davies R.M."/>
            <person name="Feltwell T."/>
            <person name="Holroyd S."/>
            <person name="Jagels K."/>
            <person name="Karlyshev A.V."/>
            <person name="Moule S."/>
            <person name="Pallen M.J."/>
            <person name="Penn C.W."/>
            <person name="Quail M.A."/>
            <person name="Rajandream M.A."/>
            <person name="Rutherford K.M."/>
            <person name="van Vliet A.H.M."/>
            <person name="Whitehead S."/>
            <person name="Barrell B.G."/>
        </authorList>
    </citation>
    <scope>NUCLEOTIDE SEQUENCE [LARGE SCALE GENOMIC DNA]</scope>
    <source>
        <strain>ATCC 700819 / NCTC 11168</strain>
    </source>
</reference>
<proteinExistence type="inferred from homology"/>
<gene>
    <name type="ordered locus">Cj0371</name>
</gene>
<feature type="signal peptide" evidence="1">
    <location>
        <begin position="1"/>
        <end position="26"/>
    </location>
</feature>
<feature type="chain" id="PRO_0000036323" description="UPF0323 lipoprotein Cj0371">
    <location>
        <begin position="27"/>
        <end position="201"/>
    </location>
</feature>
<feature type="region of interest" description="Disordered" evidence="2">
    <location>
        <begin position="169"/>
        <end position="201"/>
    </location>
</feature>
<feature type="compositionally biased region" description="Low complexity" evidence="2">
    <location>
        <begin position="170"/>
        <end position="184"/>
    </location>
</feature>
<feature type="compositionally biased region" description="Low complexity" evidence="2">
    <location>
        <begin position="191"/>
        <end position="201"/>
    </location>
</feature>
<feature type="lipid moiety-binding region" description="N-palmitoyl cysteine" evidence="1">
    <location>
        <position position="27"/>
    </location>
</feature>
<feature type="lipid moiety-binding region" description="S-diacylglycerol cysteine" evidence="1">
    <location>
        <position position="27"/>
    </location>
</feature>
<organism>
    <name type="scientific">Campylobacter jejuni subsp. jejuni serotype O:2 (strain ATCC 700819 / NCTC 11168)</name>
    <dbReference type="NCBI Taxonomy" id="192222"/>
    <lineage>
        <taxon>Bacteria</taxon>
        <taxon>Pseudomonadati</taxon>
        <taxon>Campylobacterota</taxon>
        <taxon>Epsilonproteobacteria</taxon>
        <taxon>Campylobacterales</taxon>
        <taxon>Campylobacteraceae</taxon>
        <taxon>Campylobacter</taxon>
    </lineage>
</organism>
<evidence type="ECO:0000255" key="1">
    <source>
        <dbReference type="HAMAP-Rule" id="MF_01421"/>
    </source>
</evidence>
<evidence type="ECO:0000256" key="2">
    <source>
        <dbReference type="SAM" id="MobiDB-lite"/>
    </source>
</evidence>
<sequence>MKKIKKIIQIGMIGGLAAVAGGALAGCGSNNDNADTLNQAANAQGAFVIIEETAPGQYKIKDQYPSDETRVVLKDLNGTERILSKEEMDALIKEEAAKIDNGTSNLTKDNGQISSGGLSLGETLLASAAGAILGSWIGSKLFNNQNFANQQRGAFSNQSAYQRSVNSFNKAGTTSSASSAKKSGFFGGGSKATSSSSSFGS</sequence>
<keyword id="KW-1003">Cell membrane</keyword>
<keyword id="KW-0449">Lipoprotein</keyword>
<keyword id="KW-0472">Membrane</keyword>
<keyword id="KW-0564">Palmitate</keyword>
<keyword id="KW-1185">Reference proteome</keyword>
<keyword id="KW-0732">Signal</keyword>
<accession>Q9PID1</accession>
<accession>Q0PBD9</accession>
<dbReference type="EMBL" id="AL111168">
    <property type="protein sequence ID" value="CAL34521.1"/>
    <property type="molecule type" value="Genomic_DNA"/>
</dbReference>
<dbReference type="PIR" id="A81380">
    <property type="entry name" value="A81380"/>
</dbReference>
<dbReference type="RefSeq" id="WP_002854351.1">
    <property type="nucleotide sequence ID" value="NZ_SZUC01000004.1"/>
</dbReference>
<dbReference type="RefSeq" id="YP_002343808.1">
    <property type="nucleotide sequence ID" value="NC_002163.1"/>
</dbReference>
<dbReference type="IntAct" id="Q9PID1">
    <property type="interactions" value="40"/>
</dbReference>
<dbReference type="STRING" id="192222.Cj0371"/>
<dbReference type="PaxDb" id="192222-Cj0371"/>
<dbReference type="EnsemblBacteria" id="CAL34521">
    <property type="protein sequence ID" value="CAL34521"/>
    <property type="gene ID" value="Cj0371"/>
</dbReference>
<dbReference type="GeneID" id="904694"/>
<dbReference type="KEGG" id="cje:Cj0371"/>
<dbReference type="PATRIC" id="fig|192222.6.peg.362"/>
<dbReference type="eggNOG" id="ENOG502ZIB8">
    <property type="taxonomic scope" value="Bacteria"/>
</dbReference>
<dbReference type="HOGENOM" id="CLU_111520_0_0_7"/>
<dbReference type="OrthoDB" id="5339730at2"/>
<dbReference type="PHI-base" id="PHI:6685"/>
<dbReference type="Proteomes" id="UP000000799">
    <property type="component" value="Chromosome"/>
</dbReference>
<dbReference type="GO" id="GO:0005886">
    <property type="term" value="C:plasma membrane"/>
    <property type="evidence" value="ECO:0007669"/>
    <property type="project" value="UniProtKB-SubCell"/>
</dbReference>
<dbReference type="HAMAP" id="MF_01421">
    <property type="entry name" value="UPF0323"/>
    <property type="match status" value="1"/>
</dbReference>
<dbReference type="InterPro" id="IPR020913">
    <property type="entry name" value="UPF0323"/>
</dbReference>
<dbReference type="NCBIfam" id="NF003146">
    <property type="entry name" value="PRK04081.1"/>
    <property type="match status" value="1"/>
</dbReference>
<dbReference type="PROSITE" id="PS51257">
    <property type="entry name" value="PROKAR_LIPOPROTEIN"/>
    <property type="match status" value="1"/>
</dbReference>
<comment type="subcellular location">
    <subcellularLocation>
        <location evidence="1">Cell membrane</location>
        <topology evidence="1">Lipid-anchor</topology>
    </subcellularLocation>
</comment>
<comment type="similarity">
    <text evidence="1">Belongs to the UPF0323 family.</text>
</comment>